<protein>
    <recommendedName>
        <fullName>Ribulose bisphosphate carboxylase-like protein 1</fullName>
        <shortName>RuBisCO-like protein</shortName>
    </recommendedName>
</protein>
<name>RBLL1_RHOPA</name>
<organism>
    <name type="scientific">Rhodopseudomonas palustris (strain ATCC BAA-98 / CGA009)</name>
    <dbReference type="NCBI Taxonomy" id="258594"/>
    <lineage>
        <taxon>Bacteria</taxon>
        <taxon>Pseudomonadati</taxon>
        <taxon>Pseudomonadota</taxon>
        <taxon>Alphaproteobacteria</taxon>
        <taxon>Hyphomicrobiales</taxon>
        <taxon>Nitrobacteraceae</taxon>
        <taxon>Rhodopseudomonas</taxon>
    </lineage>
</organism>
<accession>Q6N7T7</accession>
<comment type="function">
    <text>Unknown. Probably does not have RuBisCO activity.</text>
</comment>
<comment type="similarity">
    <text evidence="1">Belongs to the RuBisCO large chain family. Type IV subfamily.</text>
</comment>
<sequence length="368" mass="38755">MDMSERIIVTYQVAAAPAEIAARAEALAIEQSVECPLAAVTEQQIRDEIVGRVEAIAPIGETRFSVRVSLASATAPAEPGQLLNMLFGNSSIQPDVTLADVELPPAYPAAFGGPKLGISGLRAKLGAPRRALTGSALKPQGLAPEALAGLAHRLALGGVDLIKDDHGIADQAFSPFAARVPAVARAMREACAVRGAAMLYAPHVSGSLDDMRRQLDIVRREGLSVVMLMPMIVGLANFHLIAKEAEGLIVLAHPSLAGAQRIAPDLLLGKLFRLLGADATIFPHYGGRFAYTPETCRALADAARRDWHDLKPCLPVPAGGIAIDRIKELLAFYGTDVMLLIGGSLLAAGEQLTEHAARFTAEVASHGQ</sequence>
<dbReference type="EMBL" id="BX572600">
    <property type="protein sequence ID" value="CAE27610.1"/>
    <property type="molecule type" value="Genomic_DNA"/>
</dbReference>
<dbReference type="SMR" id="Q6N7T7"/>
<dbReference type="STRING" id="258594.RPA2169"/>
<dbReference type="eggNOG" id="COG1850">
    <property type="taxonomic scope" value="Bacteria"/>
</dbReference>
<dbReference type="HOGENOM" id="CLU_031450_3_1_5"/>
<dbReference type="PhylomeDB" id="Q6N7T7"/>
<dbReference type="GO" id="GO:0000287">
    <property type="term" value="F:magnesium ion binding"/>
    <property type="evidence" value="ECO:0007669"/>
    <property type="project" value="InterPro"/>
</dbReference>
<dbReference type="GO" id="GO:0016984">
    <property type="term" value="F:ribulose-bisphosphate carboxylase activity"/>
    <property type="evidence" value="ECO:0007669"/>
    <property type="project" value="InterPro"/>
</dbReference>
<dbReference type="GO" id="GO:0015977">
    <property type="term" value="P:carbon fixation"/>
    <property type="evidence" value="ECO:0007669"/>
    <property type="project" value="InterPro"/>
</dbReference>
<dbReference type="CDD" id="cd08210">
    <property type="entry name" value="RLP_RrRLP"/>
    <property type="match status" value="1"/>
</dbReference>
<dbReference type="Gene3D" id="3.20.20.110">
    <property type="entry name" value="Ribulose bisphosphate carboxylase, large subunit, C-terminal domain"/>
    <property type="match status" value="1"/>
</dbReference>
<dbReference type="Gene3D" id="3.30.70.150">
    <property type="entry name" value="RuBisCO large subunit, N-terminal domain"/>
    <property type="match status" value="1"/>
</dbReference>
<dbReference type="InterPro" id="IPR033966">
    <property type="entry name" value="RuBisCO"/>
</dbReference>
<dbReference type="InterPro" id="IPR000685">
    <property type="entry name" value="RuBisCO_lsu_C"/>
</dbReference>
<dbReference type="InterPro" id="IPR036376">
    <property type="entry name" value="RuBisCO_lsu_C_sf"/>
</dbReference>
<dbReference type="InterPro" id="IPR036422">
    <property type="entry name" value="RuBisCO_lsu_N_sf"/>
</dbReference>
<dbReference type="PANTHER" id="PTHR42704">
    <property type="entry name" value="RIBULOSE BISPHOSPHATE CARBOXYLASE"/>
    <property type="match status" value="1"/>
</dbReference>
<dbReference type="PANTHER" id="PTHR42704:SF17">
    <property type="entry name" value="RIBULOSE BISPHOSPHATE CARBOXYLASE LARGE CHAIN"/>
    <property type="match status" value="1"/>
</dbReference>
<dbReference type="Pfam" id="PF00016">
    <property type="entry name" value="RuBisCO_large"/>
    <property type="match status" value="1"/>
</dbReference>
<dbReference type="SFLD" id="SFLDF00158">
    <property type="entry name" value="5-methylthio-D-ribulose_1-phos"/>
    <property type="match status" value="1"/>
</dbReference>
<dbReference type="SFLD" id="SFLDG00301">
    <property type="entry name" value="RuBisCO-like_proteins"/>
    <property type="match status" value="1"/>
</dbReference>
<dbReference type="SUPFAM" id="SSF51649">
    <property type="entry name" value="RuBisCo, C-terminal domain"/>
    <property type="match status" value="1"/>
</dbReference>
<dbReference type="SUPFAM" id="SSF54966">
    <property type="entry name" value="RuBisCO, large subunit, small (N-terminal) domain"/>
    <property type="match status" value="1"/>
</dbReference>
<proteinExistence type="inferred from homology"/>
<gene>
    <name type="primary">rlp1</name>
    <name type="ordered locus">RPA2169</name>
</gene>
<evidence type="ECO:0000305" key="1"/>
<reference key="1">
    <citation type="journal article" date="2004" name="Nat. Biotechnol.">
        <title>Complete genome sequence of the metabolically versatile photosynthetic bacterium Rhodopseudomonas palustris.</title>
        <authorList>
            <person name="Larimer F.W."/>
            <person name="Chain P."/>
            <person name="Hauser L."/>
            <person name="Lamerdin J.E."/>
            <person name="Malfatti S."/>
            <person name="Do L."/>
            <person name="Land M.L."/>
            <person name="Pelletier D.A."/>
            <person name="Beatty J.T."/>
            <person name="Lang A.S."/>
            <person name="Tabita F.R."/>
            <person name="Gibson J.L."/>
            <person name="Hanson T.E."/>
            <person name="Bobst C."/>
            <person name="Torres y Torres J.L."/>
            <person name="Peres C."/>
            <person name="Harrison F.H."/>
            <person name="Gibson J."/>
            <person name="Harwood C.S."/>
        </authorList>
    </citation>
    <scope>NUCLEOTIDE SEQUENCE [LARGE SCALE GENOMIC DNA]</scope>
    <source>
        <strain>ATCC BAA-98 / CGA009</strain>
    </source>
</reference>
<feature type="chain" id="PRO_0000062682" description="Ribulose bisphosphate carboxylase-like protein 1">
    <location>
        <begin position="1"/>
        <end position="368"/>
    </location>
</feature>